<name>Y1501_MYCTU</name>
<protein>
    <recommendedName>
        <fullName>Uncharacterized protein Rv1501</fullName>
    </recommendedName>
</protein>
<comment type="similarity">
    <text evidence="1">Belongs to the PhyH family.</text>
</comment>
<reference key="1">
    <citation type="journal article" date="1998" name="Nature">
        <title>Deciphering the biology of Mycobacterium tuberculosis from the complete genome sequence.</title>
        <authorList>
            <person name="Cole S.T."/>
            <person name="Brosch R."/>
            <person name="Parkhill J."/>
            <person name="Garnier T."/>
            <person name="Churcher C.M."/>
            <person name="Harris D.E."/>
            <person name="Gordon S.V."/>
            <person name="Eiglmeier K."/>
            <person name="Gas S."/>
            <person name="Barry C.E. III"/>
            <person name="Tekaia F."/>
            <person name="Badcock K."/>
            <person name="Basham D."/>
            <person name="Brown D."/>
            <person name="Chillingworth T."/>
            <person name="Connor R."/>
            <person name="Davies R.M."/>
            <person name="Devlin K."/>
            <person name="Feltwell T."/>
            <person name="Gentles S."/>
            <person name="Hamlin N."/>
            <person name="Holroyd S."/>
            <person name="Hornsby T."/>
            <person name="Jagels K."/>
            <person name="Krogh A."/>
            <person name="McLean J."/>
            <person name="Moule S."/>
            <person name="Murphy L.D."/>
            <person name="Oliver S."/>
            <person name="Osborne J."/>
            <person name="Quail M.A."/>
            <person name="Rajandream M.A."/>
            <person name="Rogers J."/>
            <person name="Rutter S."/>
            <person name="Seeger K."/>
            <person name="Skelton S."/>
            <person name="Squares S."/>
            <person name="Squares R."/>
            <person name="Sulston J.E."/>
            <person name="Taylor K."/>
            <person name="Whitehead S."/>
            <person name="Barrell B.G."/>
        </authorList>
    </citation>
    <scope>NUCLEOTIDE SEQUENCE [LARGE SCALE GENOMIC DNA]</scope>
    <source>
        <strain>ATCC 25618 / H37Rv</strain>
    </source>
</reference>
<reference key="2">
    <citation type="journal article" date="2011" name="Mol. Cell. Proteomics">
        <title>Proteogenomic analysis of Mycobacterium tuberculosis by high resolution mass spectrometry.</title>
        <authorList>
            <person name="Kelkar D.S."/>
            <person name="Kumar D."/>
            <person name="Kumar P."/>
            <person name="Balakrishnan L."/>
            <person name="Muthusamy B."/>
            <person name="Yadav A.K."/>
            <person name="Shrivastava P."/>
            <person name="Marimuthu A."/>
            <person name="Anand S."/>
            <person name="Sundaram H."/>
            <person name="Kingsbury R."/>
            <person name="Harsha H.C."/>
            <person name="Nair B."/>
            <person name="Prasad T.S."/>
            <person name="Chauhan D.S."/>
            <person name="Katoch K."/>
            <person name="Katoch V.M."/>
            <person name="Kumar P."/>
            <person name="Chaerkady R."/>
            <person name="Ramachandran S."/>
            <person name="Dash D."/>
            <person name="Pandey A."/>
        </authorList>
    </citation>
    <scope>IDENTIFICATION BY MASS SPECTROMETRY [LARGE SCALE ANALYSIS]</scope>
    <source>
        <strain>ATCC 25618 / H37Rv</strain>
    </source>
</reference>
<keyword id="KW-1185">Reference proteome</keyword>
<gene>
    <name type="ordered locus">Rv1501</name>
    <name type="ORF">MTCY277.23</name>
</gene>
<organism>
    <name type="scientific">Mycobacterium tuberculosis (strain ATCC 25618 / H37Rv)</name>
    <dbReference type="NCBI Taxonomy" id="83332"/>
    <lineage>
        <taxon>Bacteria</taxon>
        <taxon>Bacillati</taxon>
        <taxon>Actinomycetota</taxon>
        <taxon>Actinomycetes</taxon>
        <taxon>Mycobacteriales</taxon>
        <taxon>Mycobacteriaceae</taxon>
        <taxon>Mycobacterium</taxon>
        <taxon>Mycobacterium tuberculosis complex</taxon>
    </lineage>
</organism>
<feature type="chain" id="PRO_0000215234" description="Uncharacterized protein Rv1501">
    <location>
        <begin position="1"/>
        <end position="273"/>
    </location>
</feature>
<proteinExistence type="evidence at protein level"/>
<dbReference type="EMBL" id="AL123456">
    <property type="protein sequence ID" value="CCP44263.1"/>
    <property type="molecule type" value="Genomic_DNA"/>
</dbReference>
<dbReference type="PIR" id="H70712">
    <property type="entry name" value="H70712"/>
</dbReference>
<dbReference type="RefSeq" id="NP_216017.1">
    <property type="nucleotide sequence ID" value="NC_000962.3"/>
</dbReference>
<dbReference type="RefSeq" id="WP_003898901.1">
    <property type="nucleotide sequence ID" value="NZ_NVQJ01000004.1"/>
</dbReference>
<dbReference type="SMR" id="P9WI91"/>
<dbReference type="FunCoup" id="P9WI91">
    <property type="interactions" value="33"/>
</dbReference>
<dbReference type="STRING" id="83332.Rv1501"/>
<dbReference type="PaxDb" id="83332-Rv1501"/>
<dbReference type="DNASU" id="886499"/>
<dbReference type="GeneID" id="886499"/>
<dbReference type="KEGG" id="mtu:Rv1501"/>
<dbReference type="KEGG" id="mtv:RVBD_1501"/>
<dbReference type="TubercuList" id="Rv1501"/>
<dbReference type="eggNOG" id="COG5285">
    <property type="taxonomic scope" value="Bacteria"/>
</dbReference>
<dbReference type="InParanoid" id="P9WI91"/>
<dbReference type="OrthoDB" id="9796766at2"/>
<dbReference type="PhylomeDB" id="P9WI91"/>
<dbReference type="Proteomes" id="UP000001584">
    <property type="component" value="Chromosome"/>
</dbReference>
<dbReference type="GO" id="GO:0016706">
    <property type="term" value="F:2-oxoglutarate-dependent dioxygenase activity"/>
    <property type="evidence" value="ECO:0007669"/>
    <property type="project" value="UniProtKB-ARBA"/>
</dbReference>
<dbReference type="GO" id="GO:0005506">
    <property type="term" value="F:iron ion binding"/>
    <property type="evidence" value="ECO:0007669"/>
    <property type="project" value="UniProtKB-ARBA"/>
</dbReference>
<dbReference type="Gene3D" id="2.60.120.620">
    <property type="entry name" value="q2cbj1_9rhob like domain"/>
    <property type="match status" value="1"/>
</dbReference>
<dbReference type="InterPro" id="IPR008775">
    <property type="entry name" value="Phytyl_CoA_dOase-like"/>
</dbReference>
<dbReference type="PANTHER" id="PTHR20883:SF48">
    <property type="entry name" value="ECTOINE DIOXYGENASE"/>
    <property type="match status" value="1"/>
</dbReference>
<dbReference type="PANTHER" id="PTHR20883">
    <property type="entry name" value="PHYTANOYL-COA DIOXYGENASE DOMAIN CONTAINING 1"/>
    <property type="match status" value="1"/>
</dbReference>
<dbReference type="Pfam" id="PF05721">
    <property type="entry name" value="PhyH"/>
    <property type="match status" value="1"/>
</dbReference>
<dbReference type="SUPFAM" id="SSF51197">
    <property type="entry name" value="Clavaminate synthase-like"/>
    <property type="match status" value="1"/>
</dbReference>
<sequence>MIPVKVENNTSLDQVQDALNCVGYAVVEDVLDEASLAATRDRMYRVQERILTEIGKERLARAGELGVLRLMMKYDPHFFTFLEIPEVLSIVDRVLSETAILHLQNGFILPSFPPFSTPDVFQNAFHQDFPRVLSGYIASVNIMFAIDPFTRDTGATLVVPGSHQRIEKPDHTYLARNAVPVQCAAGSLFVFDSTLWHAAGRNTSGKDRLAINHQFTRSFFKQQIDYVRALGDAVVLEQPARTQQLLGWYSRVVTNLDEYYQPPDKRLYRKGQG</sequence>
<accession>P9WI91</accession>
<accession>L0T9T6</accession>
<accession>P67770</accession>
<accession>P71782</accession>
<evidence type="ECO:0000305" key="1"/>